<dbReference type="EC" id="1.15.1.1" evidence="2"/>
<dbReference type="GO" id="GO:0046872">
    <property type="term" value="F:metal ion binding"/>
    <property type="evidence" value="ECO:0007669"/>
    <property type="project" value="UniProtKB-KW"/>
</dbReference>
<dbReference type="GO" id="GO:0004784">
    <property type="term" value="F:superoxide dismutase activity"/>
    <property type="evidence" value="ECO:0007669"/>
    <property type="project" value="UniProtKB-EC"/>
</dbReference>
<feature type="chain" id="PRO_0000159967" description="Superoxide dismutase [Mn/Fe]">
    <location>
        <begin position="1"/>
        <end position="13" status="greater than"/>
    </location>
</feature>
<feature type="non-terminal residue">
    <location>
        <position position="13"/>
    </location>
</feature>
<evidence type="ECO:0000250" key="1">
    <source>
        <dbReference type="UniProtKB" id="P04179"/>
    </source>
</evidence>
<evidence type="ECO:0000250" key="2">
    <source>
        <dbReference type="UniProtKB" id="P0A0J3"/>
    </source>
</evidence>
<evidence type="ECO:0000250" key="3">
    <source>
        <dbReference type="UniProtKB" id="P80293"/>
    </source>
</evidence>
<evidence type="ECO:0000255" key="4"/>
<evidence type="ECO:0000305" key="5"/>
<organism>
    <name type="scientific">Arthrobotrys dactyloides</name>
    <name type="common">Nematode-trapping fungus</name>
    <dbReference type="NCBI Taxonomy" id="74499"/>
    <lineage>
        <taxon>Eukaryota</taxon>
        <taxon>Fungi</taxon>
        <taxon>Dikarya</taxon>
        <taxon>Ascomycota</taxon>
        <taxon>Pezizomycotina</taxon>
        <taxon>Orbiliomycetes</taxon>
        <taxon>Orbiliales</taxon>
        <taxon>Orbiliaceae</taxon>
        <taxon>Drechslerella</taxon>
    </lineage>
</organism>
<accession>P83289</accession>
<name>SODM_ARTDA</name>
<protein>
    <recommendedName>
        <fullName>Superoxide dismutase [Mn/Fe]</fullName>
        <ecNumber evidence="2">1.15.1.1</ecNumber>
    </recommendedName>
</protein>
<reference evidence="5" key="1">
    <citation type="submission" date="2002-02" db="UniProtKB">
        <authorList>
            <person name="Zhao M."/>
            <person name="Zhang K."/>
        </authorList>
    </citation>
    <scope>PROTEIN SEQUENCE</scope>
    <source>
        <strain>072</strain>
    </source>
</reference>
<comment type="function">
    <text evidence="1">Destroys superoxide anion radicals which are normally produced within the cells and which are toxic to biological systems.</text>
</comment>
<comment type="catalytic activity">
    <reaction evidence="2">
        <text>2 superoxide + 2 H(+) = H2O2 + O2</text>
        <dbReference type="Rhea" id="RHEA:20696"/>
        <dbReference type="ChEBI" id="CHEBI:15378"/>
        <dbReference type="ChEBI" id="CHEBI:15379"/>
        <dbReference type="ChEBI" id="CHEBI:16240"/>
        <dbReference type="ChEBI" id="CHEBI:18421"/>
        <dbReference type="EC" id="1.15.1.1"/>
    </reaction>
</comment>
<comment type="cofactor">
    <cofactor evidence="3">
        <name>Mn(2+)</name>
        <dbReference type="ChEBI" id="CHEBI:29035"/>
    </cofactor>
    <cofactor evidence="3">
        <name>Fe(2+)</name>
        <dbReference type="ChEBI" id="CHEBI:29033"/>
    </cofactor>
    <text evidence="3">Binds 1 Mn(2+) or Fe(2+) ion per subunit.</text>
</comment>
<comment type="similarity">
    <text evidence="4">Belongs to the iron/manganese superoxide dismutase family.</text>
</comment>
<proteinExistence type="evidence at protein level"/>
<sequence length="13" mass="1515">AYELPELPYAYDA</sequence>
<keyword id="KW-0049">Antioxidant</keyword>
<keyword id="KW-0903">Direct protein sequencing</keyword>
<keyword id="KW-0408">Iron</keyword>
<keyword id="KW-0464">Manganese</keyword>
<keyword id="KW-0479">Metal-binding</keyword>
<keyword id="KW-0560">Oxidoreductase</keyword>